<name>GCH1_SALG2</name>
<proteinExistence type="inferred from homology"/>
<comment type="catalytic activity">
    <reaction evidence="1">
        <text>GTP + H2O = 7,8-dihydroneopterin 3'-triphosphate + formate + H(+)</text>
        <dbReference type="Rhea" id="RHEA:17473"/>
        <dbReference type="ChEBI" id="CHEBI:15377"/>
        <dbReference type="ChEBI" id="CHEBI:15378"/>
        <dbReference type="ChEBI" id="CHEBI:15740"/>
        <dbReference type="ChEBI" id="CHEBI:37565"/>
        <dbReference type="ChEBI" id="CHEBI:58462"/>
        <dbReference type="EC" id="3.5.4.16"/>
    </reaction>
</comment>
<comment type="pathway">
    <text evidence="1">Cofactor biosynthesis; 7,8-dihydroneopterin triphosphate biosynthesis; 7,8-dihydroneopterin triphosphate from GTP: step 1/1.</text>
</comment>
<comment type="subunit">
    <text evidence="1">Homomer.</text>
</comment>
<comment type="similarity">
    <text evidence="1">Belongs to the GTP cyclohydrolase I family.</text>
</comment>
<keyword id="KW-0342">GTP-binding</keyword>
<keyword id="KW-0378">Hydrolase</keyword>
<keyword id="KW-0479">Metal-binding</keyword>
<keyword id="KW-0547">Nucleotide-binding</keyword>
<keyword id="KW-0554">One-carbon metabolism</keyword>
<keyword id="KW-0862">Zinc</keyword>
<dbReference type="EC" id="3.5.4.16" evidence="1"/>
<dbReference type="EMBL" id="AM933173">
    <property type="protein sequence ID" value="CAR38064.1"/>
    <property type="molecule type" value="Genomic_DNA"/>
</dbReference>
<dbReference type="RefSeq" id="WP_001139612.1">
    <property type="nucleotide sequence ID" value="NC_011274.1"/>
</dbReference>
<dbReference type="SMR" id="B5RC32"/>
<dbReference type="KEGG" id="seg:SG2230"/>
<dbReference type="HOGENOM" id="CLU_049768_3_2_6"/>
<dbReference type="UniPathway" id="UPA00848">
    <property type="reaction ID" value="UER00151"/>
</dbReference>
<dbReference type="Proteomes" id="UP000008321">
    <property type="component" value="Chromosome"/>
</dbReference>
<dbReference type="GO" id="GO:0005737">
    <property type="term" value="C:cytoplasm"/>
    <property type="evidence" value="ECO:0007669"/>
    <property type="project" value="TreeGrafter"/>
</dbReference>
<dbReference type="GO" id="GO:0005525">
    <property type="term" value="F:GTP binding"/>
    <property type="evidence" value="ECO:0007669"/>
    <property type="project" value="UniProtKB-KW"/>
</dbReference>
<dbReference type="GO" id="GO:0003934">
    <property type="term" value="F:GTP cyclohydrolase I activity"/>
    <property type="evidence" value="ECO:0007669"/>
    <property type="project" value="UniProtKB-UniRule"/>
</dbReference>
<dbReference type="GO" id="GO:0008270">
    <property type="term" value="F:zinc ion binding"/>
    <property type="evidence" value="ECO:0007669"/>
    <property type="project" value="UniProtKB-UniRule"/>
</dbReference>
<dbReference type="GO" id="GO:0006730">
    <property type="term" value="P:one-carbon metabolic process"/>
    <property type="evidence" value="ECO:0007669"/>
    <property type="project" value="UniProtKB-UniRule"/>
</dbReference>
<dbReference type="GO" id="GO:0006729">
    <property type="term" value="P:tetrahydrobiopterin biosynthetic process"/>
    <property type="evidence" value="ECO:0007669"/>
    <property type="project" value="TreeGrafter"/>
</dbReference>
<dbReference type="GO" id="GO:0046654">
    <property type="term" value="P:tetrahydrofolate biosynthetic process"/>
    <property type="evidence" value="ECO:0007669"/>
    <property type="project" value="UniProtKB-UniRule"/>
</dbReference>
<dbReference type="FunFam" id="1.10.286.10:FF:000002">
    <property type="entry name" value="GTP cyclohydrolase 1"/>
    <property type="match status" value="1"/>
</dbReference>
<dbReference type="FunFam" id="3.30.1130.10:FF:000001">
    <property type="entry name" value="GTP cyclohydrolase 1"/>
    <property type="match status" value="1"/>
</dbReference>
<dbReference type="Gene3D" id="1.10.286.10">
    <property type="match status" value="1"/>
</dbReference>
<dbReference type="Gene3D" id="3.30.1130.10">
    <property type="match status" value="1"/>
</dbReference>
<dbReference type="HAMAP" id="MF_00223">
    <property type="entry name" value="FolE"/>
    <property type="match status" value="1"/>
</dbReference>
<dbReference type="InterPro" id="IPR043133">
    <property type="entry name" value="GTP-CH-I_C/QueF"/>
</dbReference>
<dbReference type="InterPro" id="IPR043134">
    <property type="entry name" value="GTP-CH-I_N"/>
</dbReference>
<dbReference type="InterPro" id="IPR001474">
    <property type="entry name" value="GTP_CycHdrlase_I"/>
</dbReference>
<dbReference type="InterPro" id="IPR018234">
    <property type="entry name" value="GTP_CycHdrlase_I_CS"/>
</dbReference>
<dbReference type="InterPro" id="IPR020602">
    <property type="entry name" value="GTP_CycHdrlase_I_dom"/>
</dbReference>
<dbReference type="NCBIfam" id="TIGR00063">
    <property type="entry name" value="folE"/>
    <property type="match status" value="1"/>
</dbReference>
<dbReference type="NCBIfam" id="NF006824">
    <property type="entry name" value="PRK09347.1-1"/>
    <property type="match status" value="1"/>
</dbReference>
<dbReference type="NCBIfam" id="NF006826">
    <property type="entry name" value="PRK09347.1-3"/>
    <property type="match status" value="1"/>
</dbReference>
<dbReference type="PANTHER" id="PTHR11109:SF7">
    <property type="entry name" value="GTP CYCLOHYDROLASE 1"/>
    <property type="match status" value="1"/>
</dbReference>
<dbReference type="PANTHER" id="PTHR11109">
    <property type="entry name" value="GTP CYCLOHYDROLASE I"/>
    <property type="match status" value="1"/>
</dbReference>
<dbReference type="Pfam" id="PF01227">
    <property type="entry name" value="GTP_cyclohydroI"/>
    <property type="match status" value="1"/>
</dbReference>
<dbReference type="SUPFAM" id="SSF55620">
    <property type="entry name" value="Tetrahydrobiopterin biosynthesis enzymes-like"/>
    <property type="match status" value="1"/>
</dbReference>
<dbReference type="PROSITE" id="PS00859">
    <property type="entry name" value="GTP_CYCLOHYDROL_1_1"/>
    <property type="match status" value="1"/>
</dbReference>
<dbReference type="PROSITE" id="PS00860">
    <property type="entry name" value="GTP_CYCLOHYDROL_1_2"/>
    <property type="match status" value="1"/>
</dbReference>
<feature type="chain" id="PRO_1000100193" description="GTP cyclohydrolase 1">
    <location>
        <begin position="1"/>
        <end position="222"/>
    </location>
</feature>
<feature type="binding site" evidence="1">
    <location>
        <position position="111"/>
    </location>
    <ligand>
        <name>Zn(2+)</name>
        <dbReference type="ChEBI" id="CHEBI:29105"/>
    </ligand>
</feature>
<feature type="binding site" evidence="1">
    <location>
        <position position="114"/>
    </location>
    <ligand>
        <name>Zn(2+)</name>
        <dbReference type="ChEBI" id="CHEBI:29105"/>
    </ligand>
</feature>
<feature type="binding site" evidence="1">
    <location>
        <position position="182"/>
    </location>
    <ligand>
        <name>Zn(2+)</name>
        <dbReference type="ChEBI" id="CHEBI:29105"/>
    </ligand>
</feature>
<protein>
    <recommendedName>
        <fullName evidence="1">GTP cyclohydrolase 1</fullName>
        <ecNumber evidence="1">3.5.4.16</ecNumber>
    </recommendedName>
    <alternativeName>
        <fullName evidence="1">GTP cyclohydrolase I</fullName>
        <shortName evidence="1">GTP-CH-I</shortName>
    </alternativeName>
</protein>
<organism>
    <name type="scientific">Salmonella gallinarum (strain 287/91 / NCTC 13346)</name>
    <dbReference type="NCBI Taxonomy" id="550538"/>
    <lineage>
        <taxon>Bacteria</taxon>
        <taxon>Pseudomonadati</taxon>
        <taxon>Pseudomonadota</taxon>
        <taxon>Gammaproteobacteria</taxon>
        <taxon>Enterobacterales</taxon>
        <taxon>Enterobacteriaceae</taxon>
        <taxon>Salmonella</taxon>
    </lineage>
</organism>
<accession>B5RC32</accession>
<reference key="1">
    <citation type="journal article" date="2008" name="Genome Res.">
        <title>Comparative genome analysis of Salmonella enteritidis PT4 and Salmonella gallinarum 287/91 provides insights into evolutionary and host adaptation pathways.</title>
        <authorList>
            <person name="Thomson N.R."/>
            <person name="Clayton D.J."/>
            <person name="Windhorst D."/>
            <person name="Vernikos G."/>
            <person name="Davidson S."/>
            <person name="Churcher C."/>
            <person name="Quail M.A."/>
            <person name="Stevens M."/>
            <person name="Jones M.A."/>
            <person name="Watson M."/>
            <person name="Barron A."/>
            <person name="Layton A."/>
            <person name="Pickard D."/>
            <person name="Kingsley R.A."/>
            <person name="Bignell A."/>
            <person name="Clark L."/>
            <person name="Harris B."/>
            <person name="Ormond D."/>
            <person name="Abdellah Z."/>
            <person name="Brooks K."/>
            <person name="Cherevach I."/>
            <person name="Chillingworth T."/>
            <person name="Woodward J."/>
            <person name="Norberczak H."/>
            <person name="Lord A."/>
            <person name="Arrowsmith C."/>
            <person name="Jagels K."/>
            <person name="Moule S."/>
            <person name="Mungall K."/>
            <person name="Saunders M."/>
            <person name="Whitehead S."/>
            <person name="Chabalgoity J.A."/>
            <person name="Maskell D."/>
            <person name="Humphreys T."/>
            <person name="Roberts M."/>
            <person name="Barrow P.A."/>
            <person name="Dougan G."/>
            <person name="Parkhill J."/>
        </authorList>
    </citation>
    <scope>NUCLEOTIDE SEQUENCE [LARGE SCALE GENOMIC DNA]</scope>
    <source>
        <strain>287/91 / NCTC 13346</strain>
    </source>
</reference>
<evidence type="ECO:0000255" key="1">
    <source>
        <dbReference type="HAMAP-Rule" id="MF_00223"/>
    </source>
</evidence>
<sequence length="222" mass="24847">MPSLSKEAALVHDALVARGLETPLRPPMDELDNETRKSLIAGHMTEIMQLLNLDLSDDSLMETPHRIAKMYVDEIFAGLDYANFPKITLIENKMKVDEMVTVRDITLTSTCEHHFVTIDGKATVAYIPKDYVIGLSKINRIVQFFAQRPQVQERLTQQILTALQTLLGTNNVAVSIDAVHYCVKARGIRDATSATTTTSLGGLFKSSQNTRQEFLRAVRHHP</sequence>
<gene>
    <name evidence="1" type="primary">folE</name>
    <name type="ordered locus">SG2230</name>
</gene>